<reference key="1">
    <citation type="journal article" date="2000" name="Nature">
        <title>Genome sequence of the endocellular bacterial symbiont of aphids Buchnera sp. APS.</title>
        <authorList>
            <person name="Shigenobu S."/>
            <person name="Watanabe H."/>
            <person name="Hattori M."/>
            <person name="Sakaki Y."/>
            <person name="Ishikawa H."/>
        </authorList>
    </citation>
    <scope>NUCLEOTIDE SEQUENCE [LARGE SCALE GENOMIC DNA]</scope>
    <source>
        <strain>APS</strain>
    </source>
</reference>
<organism>
    <name type="scientific">Buchnera aphidicola subsp. Acyrthosiphon pisum (strain APS)</name>
    <name type="common">Acyrthosiphon pisum symbiotic bacterium</name>
    <dbReference type="NCBI Taxonomy" id="107806"/>
    <lineage>
        <taxon>Bacteria</taxon>
        <taxon>Pseudomonadati</taxon>
        <taxon>Pseudomonadota</taxon>
        <taxon>Gammaproteobacteria</taxon>
        <taxon>Enterobacterales</taxon>
        <taxon>Erwiniaceae</taxon>
        <taxon>Buchnera</taxon>
    </lineage>
</organism>
<evidence type="ECO:0000250" key="1"/>
<evidence type="ECO:0000255" key="2"/>
<evidence type="ECO:0000305" key="3"/>
<feature type="chain" id="PRO_0000190012" description="Flagellar biosynthesis protein FlhA">
    <location>
        <begin position="1"/>
        <end position="696"/>
    </location>
</feature>
<feature type="transmembrane region" description="Helical" evidence="2">
    <location>
        <begin position="24"/>
        <end position="44"/>
    </location>
</feature>
<feature type="transmembrane region" description="Helical" evidence="2">
    <location>
        <begin position="45"/>
        <end position="65"/>
    </location>
</feature>
<feature type="transmembrane region" description="Helical" evidence="2">
    <location>
        <begin position="71"/>
        <end position="91"/>
    </location>
</feature>
<feature type="transmembrane region" description="Helical" evidence="2">
    <location>
        <begin position="121"/>
        <end position="141"/>
    </location>
</feature>
<feature type="transmembrane region" description="Helical" evidence="2">
    <location>
        <begin position="209"/>
        <end position="229"/>
    </location>
</feature>
<feature type="transmembrane region" description="Helical" evidence="2">
    <location>
        <begin position="247"/>
        <end position="267"/>
    </location>
</feature>
<feature type="transmembrane region" description="Helical" evidence="2">
    <location>
        <begin position="281"/>
        <end position="301"/>
    </location>
</feature>
<feature type="transmembrane region" description="Helical" evidence="2">
    <location>
        <begin position="302"/>
        <end position="322"/>
    </location>
</feature>
<sequence>MINFSSLLRIVKSLKTTQWQILAGPILILMILSMMVLPLAPFVLDVFFTFNIALSIIILLVSMFTRHTLEFTAFPTILLFSTLLRLALNVASTRVIFLRGHTGTNSAGRVIESFGHFLVGGNFAIGIVVFIILVIINFIVITKGASRIAEVGARFILDAMPGKQMAIDADLNAGLIGEEKAKKRRIKITQEADFYGSMDGASKFVRGDAIAGILIMVINIFGGLIIGLIQHHMFLNKAVEVYTLLTIGDGLVAQIPALVISTAAGVIVTRVSSNQNVGEQMASQLFYNPQVILLSAIVLGVLGLVPGMPNIIFLVFTVLLFILSWWLYEKKYDLENDFIKSNKKYKFIHDAISEASWNDVELEDPIRIEIGYKLTPMTDINKKGDLLDRIRIVRKKVAQEIGFLPPLVRIKNNMHLSGNSYRIFIKGVEVGQGKCFYGRFMAIHSGRETESLPFEKVYEPTFGLSGYWIDEEFKNKAQKKGYSVIESSVVLSTHLNFLITNHIDDLFGRQEAQQLLERVTIDHPKLTEDLIPNTINLTIFHKILRNLLLEHVPIRDMRTILETLSEHADTQKDPNELTSIVRIALRKIIIQKLFNQNNIIEIIGLEPNLERLLLNSLKSGTDTIEPNLSENLLIQTKEAIKKQLLIGSPLVLLVRHSLRYFLSKFLRQNFPELTVLSQFEIIDVKEIKMTNIIGTS</sequence>
<accession>P57335</accession>
<comment type="function">
    <text evidence="1">Required for formation of the rod structure of the flagellar apparatus. Together with FliI and FliH, may constitute the export apparatus of flagellin (By similarity).</text>
</comment>
<comment type="subcellular location">
    <subcellularLocation>
        <location evidence="1">Cell membrane</location>
        <topology evidence="1">Multi-pass membrane protein</topology>
    </subcellularLocation>
</comment>
<comment type="similarity">
    <text evidence="3">Belongs to the FHIPEP (flagella/HR/invasion proteins export pore) family.</text>
</comment>
<comment type="sequence caution" evidence="3">
    <conflict type="erroneous initiation">
        <sequence resource="EMBL-CDS" id="BAB12956"/>
    </conflict>
</comment>
<keyword id="KW-1005">Bacterial flagellum biogenesis</keyword>
<keyword id="KW-1006">Bacterial flagellum protein export</keyword>
<keyword id="KW-1003">Cell membrane</keyword>
<keyword id="KW-0472">Membrane</keyword>
<keyword id="KW-0653">Protein transport</keyword>
<keyword id="KW-1185">Reference proteome</keyword>
<keyword id="KW-0812">Transmembrane</keyword>
<keyword id="KW-1133">Transmembrane helix</keyword>
<keyword id="KW-0813">Transport</keyword>
<name>FLHA_BUCAI</name>
<dbReference type="EMBL" id="BA000003">
    <property type="protein sequence ID" value="BAB12956.1"/>
    <property type="status" value="ALT_INIT"/>
    <property type="molecule type" value="Genomic_DNA"/>
</dbReference>
<dbReference type="RefSeq" id="NP_240070.2">
    <property type="nucleotide sequence ID" value="NC_002528.1"/>
</dbReference>
<dbReference type="RefSeq" id="WP_010896024.1">
    <property type="nucleotide sequence ID" value="NC_002528.1"/>
</dbReference>
<dbReference type="SMR" id="P57335"/>
<dbReference type="STRING" id="563178.BUAP5A_237"/>
<dbReference type="EnsemblBacteria" id="BAB12956">
    <property type="protein sequence ID" value="BAB12956"/>
    <property type="gene ID" value="BAB12956"/>
</dbReference>
<dbReference type="KEGG" id="buc:BU241"/>
<dbReference type="PATRIC" id="fig|107806.10.peg.254"/>
<dbReference type="eggNOG" id="COG1298">
    <property type="taxonomic scope" value="Bacteria"/>
</dbReference>
<dbReference type="HOGENOM" id="CLU_015346_3_0_6"/>
<dbReference type="Proteomes" id="UP000001806">
    <property type="component" value="Chromosome"/>
</dbReference>
<dbReference type="GO" id="GO:0005886">
    <property type="term" value="C:plasma membrane"/>
    <property type="evidence" value="ECO:0007669"/>
    <property type="project" value="UniProtKB-SubCell"/>
</dbReference>
<dbReference type="GO" id="GO:0044780">
    <property type="term" value="P:bacterial-type flagellum assembly"/>
    <property type="evidence" value="ECO:0007669"/>
    <property type="project" value="InterPro"/>
</dbReference>
<dbReference type="GO" id="GO:0009306">
    <property type="term" value="P:protein secretion"/>
    <property type="evidence" value="ECO:0007669"/>
    <property type="project" value="InterPro"/>
</dbReference>
<dbReference type="Gene3D" id="3.40.30.60">
    <property type="entry name" value="FHIPEP family, domain 1"/>
    <property type="match status" value="1"/>
</dbReference>
<dbReference type="Gene3D" id="1.10.8.540">
    <property type="entry name" value="FHIPEP family, domain 3"/>
    <property type="match status" value="1"/>
</dbReference>
<dbReference type="Gene3D" id="3.40.50.12790">
    <property type="entry name" value="FHIPEP family, domain 4"/>
    <property type="match status" value="1"/>
</dbReference>
<dbReference type="InterPro" id="IPR042194">
    <property type="entry name" value="FHIPEP_1"/>
</dbReference>
<dbReference type="InterPro" id="IPR042193">
    <property type="entry name" value="FHIPEP_3"/>
</dbReference>
<dbReference type="InterPro" id="IPR042196">
    <property type="entry name" value="FHIPEP_4"/>
</dbReference>
<dbReference type="InterPro" id="IPR025505">
    <property type="entry name" value="FHIPEP_CS"/>
</dbReference>
<dbReference type="InterPro" id="IPR006301">
    <property type="entry name" value="FlhA"/>
</dbReference>
<dbReference type="InterPro" id="IPR001712">
    <property type="entry name" value="T3SS_FHIPEP"/>
</dbReference>
<dbReference type="NCBIfam" id="TIGR01398">
    <property type="entry name" value="FlhA"/>
    <property type="match status" value="1"/>
</dbReference>
<dbReference type="PANTHER" id="PTHR30161:SF1">
    <property type="entry name" value="FLAGELLAR BIOSYNTHESIS PROTEIN FLHA-RELATED"/>
    <property type="match status" value="1"/>
</dbReference>
<dbReference type="PANTHER" id="PTHR30161">
    <property type="entry name" value="FLAGELLAR EXPORT PROTEIN, MEMBRANE FLHA SUBUNIT-RELATED"/>
    <property type="match status" value="1"/>
</dbReference>
<dbReference type="Pfam" id="PF00771">
    <property type="entry name" value="FHIPEP"/>
    <property type="match status" value="1"/>
</dbReference>
<dbReference type="PIRSF" id="PIRSF005419">
    <property type="entry name" value="FlhA"/>
    <property type="match status" value="1"/>
</dbReference>
<dbReference type="PRINTS" id="PR00949">
    <property type="entry name" value="TYPE3IMAPROT"/>
</dbReference>
<dbReference type="PROSITE" id="PS00994">
    <property type="entry name" value="FHIPEP"/>
    <property type="match status" value="1"/>
</dbReference>
<protein>
    <recommendedName>
        <fullName>Flagellar biosynthesis protein FlhA</fullName>
    </recommendedName>
</protein>
<gene>
    <name type="primary">flhA</name>
    <name type="ordered locus">BU241</name>
</gene>
<proteinExistence type="inferred from homology"/>